<comment type="subcellular location">
    <subcellularLocation>
        <location evidence="1">Cell membrane</location>
        <topology evidence="1">Single-pass membrane protein</topology>
    </subcellularLocation>
</comment>
<comment type="similarity">
    <text evidence="1">Belongs to the UPF0154 family.</text>
</comment>
<gene>
    <name type="ordered locus">BCQ_3484</name>
</gene>
<name>Y3484_BACCQ</name>
<reference key="1">
    <citation type="journal article" date="2009" name="J. Bacteriol.">
        <title>Complete genome sequence of the extremophilic Bacillus cereus strain Q1 with industrial applications.</title>
        <authorList>
            <person name="Xiong Z."/>
            <person name="Jiang Y."/>
            <person name="Qi D."/>
            <person name="Lu H."/>
            <person name="Yang F."/>
            <person name="Yang J."/>
            <person name="Chen L."/>
            <person name="Sun L."/>
            <person name="Xu X."/>
            <person name="Xue Y."/>
            <person name="Zhu Y."/>
            <person name="Jin Q."/>
        </authorList>
    </citation>
    <scope>NUCLEOTIDE SEQUENCE [LARGE SCALE GENOMIC DNA]</scope>
    <source>
        <strain>Q1</strain>
    </source>
</reference>
<proteinExistence type="inferred from homology"/>
<protein>
    <recommendedName>
        <fullName evidence="1">UPF0154 protein BCQ_3484</fullName>
    </recommendedName>
</protein>
<evidence type="ECO:0000255" key="1">
    <source>
        <dbReference type="HAMAP-Rule" id="MF_00363"/>
    </source>
</evidence>
<organism>
    <name type="scientific">Bacillus cereus (strain Q1)</name>
    <dbReference type="NCBI Taxonomy" id="361100"/>
    <lineage>
        <taxon>Bacteria</taxon>
        <taxon>Bacillati</taxon>
        <taxon>Bacillota</taxon>
        <taxon>Bacilli</taxon>
        <taxon>Bacillales</taxon>
        <taxon>Bacillaceae</taxon>
        <taxon>Bacillus</taxon>
        <taxon>Bacillus cereus group</taxon>
    </lineage>
</organism>
<feature type="chain" id="PRO_1000197726" description="UPF0154 protein BCQ_3484">
    <location>
        <begin position="1"/>
        <end position="73"/>
    </location>
</feature>
<feature type="transmembrane region" description="Helical" evidence="1">
    <location>
        <begin position="3"/>
        <end position="23"/>
    </location>
</feature>
<keyword id="KW-1003">Cell membrane</keyword>
<keyword id="KW-0472">Membrane</keyword>
<keyword id="KW-0812">Transmembrane</keyword>
<keyword id="KW-1133">Transmembrane helix</keyword>
<accession>B9IUK2</accession>
<dbReference type="EMBL" id="CP000227">
    <property type="protein sequence ID" value="ACM13912.1"/>
    <property type="molecule type" value="Genomic_DNA"/>
</dbReference>
<dbReference type="SMR" id="B9IUK2"/>
<dbReference type="KEGG" id="bcq:BCQ_3484"/>
<dbReference type="HOGENOM" id="CLU_180108_0_1_9"/>
<dbReference type="Proteomes" id="UP000000441">
    <property type="component" value="Chromosome"/>
</dbReference>
<dbReference type="GO" id="GO:0005886">
    <property type="term" value="C:plasma membrane"/>
    <property type="evidence" value="ECO:0007669"/>
    <property type="project" value="UniProtKB-SubCell"/>
</dbReference>
<dbReference type="HAMAP" id="MF_00363">
    <property type="entry name" value="UPF0154"/>
    <property type="match status" value="1"/>
</dbReference>
<dbReference type="InterPro" id="IPR005359">
    <property type="entry name" value="UPF0154"/>
</dbReference>
<dbReference type="NCBIfam" id="NF002503">
    <property type="entry name" value="PRK01844.1"/>
    <property type="match status" value="1"/>
</dbReference>
<dbReference type="Pfam" id="PF03672">
    <property type="entry name" value="UPF0154"/>
    <property type="match status" value="1"/>
</dbReference>
<sequence>MPIWLGILVGVVALVAGVALGFFIARKYMMNYLQKNPPINEQMLKMMMMQMGQKPSQKKINQMMSAMNKQQMK</sequence>